<protein>
    <recommendedName>
        <fullName evidence="1">DNA-directed RNA polymerase subunit beta</fullName>
        <shortName evidence="1">RNAP subunit beta</shortName>
        <ecNumber evidence="1">2.7.7.6</ecNumber>
    </recommendedName>
    <alternativeName>
        <fullName evidence="1">RNA polymerase subunit beta</fullName>
    </alternativeName>
    <alternativeName>
        <fullName evidence="1">Transcriptase subunit beta</fullName>
    </alternativeName>
</protein>
<comment type="function">
    <text evidence="1">DNA-dependent RNA polymerase catalyzes the transcription of DNA into RNA using the four ribonucleoside triphosphates as substrates.</text>
</comment>
<comment type="catalytic activity">
    <reaction evidence="1">
        <text>RNA(n) + a ribonucleoside 5'-triphosphate = RNA(n+1) + diphosphate</text>
        <dbReference type="Rhea" id="RHEA:21248"/>
        <dbReference type="Rhea" id="RHEA-COMP:14527"/>
        <dbReference type="Rhea" id="RHEA-COMP:17342"/>
        <dbReference type="ChEBI" id="CHEBI:33019"/>
        <dbReference type="ChEBI" id="CHEBI:61557"/>
        <dbReference type="ChEBI" id="CHEBI:140395"/>
        <dbReference type="EC" id="2.7.7.6"/>
    </reaction>
</comment>
<comment type="subunit">
    <text evidence="1">The RNAP catalytic core consists of 2 alpha, 1 beta, 1 beta' and 1 omega subunit. When a sigma factor is associated with the core the holoenzyme is formed, which can initiate transcription.</text>
</comment>
<comment type="similarity">
    <text evidence="1">Belongs to the RNA polymerase beta chain family.</text>
</comment>
<organism>
    <name type="scientific">Streptococcus pyogenes serotype M5 (strain Manfredo)</name>
    <dbReference type="NCBI Taxonomy" id="160491"/>
    <lineage>
        <taxon>Bacteria</taxon>
        <taxon>Bacillati</taxon>
        <taxon>Bacillota</taxon>
        <taxon>Bacilli</taxon>
        <taxon>Lactobacillales</taxon>
        <taxon>Streptococcaceae</taxon>
        <taxon>Streptococcus</taxon>
    </lineage>
</organism>
<gene>
    <name evidence="1" type="primary">rpoB</name>
    <name type="ordered locus">SpyM50081</name>
</gene>
<keyword id="KW-0240">DNA-directed RNA polymerase</keyword>
<keyword id="KW-0548">Nucleotidyltransferase</keyword>
<keyword id="KW-0804">Transcription</keyword>
<keyword id="KW-0808">Transferase</keyword>
<name>RPOB_STRPG</name>
<sequence length="1188" mass="132855">MAGHEVRYGKHRTRRSFSRIKEVLDLPNLIEIQTDSFQDFLDSGLKEVFEDVLPISNFTDTMELEFVGYEFKEPKYTLEEARIHDASYSAPIFVTFRLVNKETGEIKTQEVFFGDFPIMTEMGTFIINGGERIIVSQLVRSPGVYFNDKVDKNGKVGYGSTVIPNRGAWLELETDSKDIAYTRIDRTRKIPFTTLVRALGFSGDDEIVDIFGESDLVRNTIEKDIHKNPSDSRTDEALKEIYERLRPGEPKTADSSRSLLIARFFDARRYDLAAVGRYKVNKKLNIKTRLLNQIIAENLVDAETGEILVEAGTEMTRSVIESIEEHLDGDLNKFVYTPNDYAVVTEPVVLQKFKVVSPIDPDRVVTIVGNANPDDKVRALTPADILAEMSYFLNLAEGLGKVDDIDHLGNRRIRAVGELLANQFRIGLARMERNVRERMSVQDNDVLTPQQIINIRPVTAAVKEFFGSSQLSQFMDQHNPLSELSHKRRLSALGPGGLTRDRAGYEVRDVHYTHYGRMCPIETPEGPNIGLINNLSSFGHLNKYGFIQTPYRKVDRATGRVTNEIVWLTADEEDEYTVAQANSKLNEDGTFAEEIVMGRHQGNNQEFSASVVDFVDVSPKQVVAVATACIPFLENDDSNRALMGANMQRQAVPLIDPKAPYVGTGMEYQAAHDSGAAVIAQHNGKVVFSDAEKVEIRRQDGSLDVYHITKFRRSNSGTAYNQRTLVKVGDIVEKGDFIADGPSMENGEMALGQNPVVAYMTWEGYNFEDAVIMSERLVKEDVYTSVHLEEFESETRDTKLGPEEITREIPNVGEEALKDLDEMGIIRIGAEVKEGDILVGKVTPKGEKDLSAEERLLHAIFGDKSREVRDTSLRVPHGGDGIVRDVKIFTRANGDELQSGVNMLVRVYIAQKRKIKVGDKMAGRHGNKGVVSRIVPVEDMPYLPDGTPVDIMLNPLGVPSRMNIGQVMELHLGMAARNLGIHIATPVFDGASSEDLWDTVREAGMDSDAKTVLYDGRTGEPFDNRVSVGVMYMIKLHHMVDDKLHARSVGPYSLVTQQPLGGKAQFGGQRFGEMEVWALEAYGASNVLQEILTYKSDDVTGRLKAYEAITKGKPIPKPGVPESFRVLVKELQSLGLDMRVLDEDDNEVELRDLDEGEDDDIMHVDDLEKAREKQAQETQEVSETTDEK</sequence>
<dbReference type="EC" id="2.7.7.6" evidence="1"/>
<dbReference type="EMBL" id="AM295007">
    <property type="protein sequence ID" value="CAM29423.1"/>
    <property type="molecule type" value="Genomic_DNA"/>
</dbReference>
<dbReference type="RefSeq" id="WP_002986567.1">
    <property type="nucleotide sequence ID" value="NC_009332.1"/>
</dbReference>
<dbReference type="SMR" id="A2RC51"/>
<dbReference type="KEGG" id="spf:SpyM50081"/>
<dbReference type="HOGENOM" id="CLU_000524_4_1_9"/>
<dbReference type="GO" id="GO:0000428">
    <property type="term" value="C:DNA-directed RNA polymerase complex"/>
    <property type="evidence" value="ECO:0007669"/>
    <property type="project" value="UniProtKB-KW"/>
</dbReference>
<dbReference type="GO" id="GO:0003677">
    <property type="term" value="F:DNA binding"/>
    <property type="evidence" value="ECO:0007669"/>
    <property type="project" value="UniProtKB-UniRule"/>
</dbReference>
<dbReference type="GO" id="GO:0003899">
    <property type="term" value="F:DNA-directed RNA polymerase activity"/>
    <property type="evidence" value="ECO:0007669"/>
    <property type="project" value="UniProtKB-UniRule"/>
</dbReference>
<dbReference type="GO" id="GO:0032549">
    <property type="term" value="F:ribonucleoside binding"/>
    <property type="evidence" value="ECO:0007669"/>
    <property type="project" value="InterPro"/>
</dbReference>
<dbReference type="GO" id="GO:0006351">
    <property type="term" value="P:DNA-templated transcription"/>
    <property type="evidence" value="ECO:0007669"/>
    <property type="project" value="UniProtKB-UniRule"/>
</dbReference>
<dbReference type="CDD" id="cd00653">
    <property type="entry name" value="RNA_pol_B_RPB2"/>
    <property type="match status" value="1"/>
</dbReference>
<dbReference type="Gene3D" id="2.40.50.100">
    <property type="match status" value="1"/>
</dbReference>
<dbReference type="Gene3D" id="2.40.50.150">
    <property type="match status" value="1"/>
</dbReference>
<dbReference type="Gene3D" id="3.90.1100.10">
    <property type="match status" value="2"/>
</dbReference>
<dbReference type="Gene3D" id="2.30.150.10">
    <property type="entry name" value="DNA-directed RNA polymerase, beta subunit, external 1 domain"/>
    <property type="match status" value="1"/>
</dbReference>
<dbReference type="Gene3D" id="2.40.270.10">
    <property type="entry name" value="DNA-directed RNA polymerase, subunit 2, domain 6"/>
    <property type="match status" value="1"/>
</dbReference>
<dbReference type="Gene3D" id="3.90.1800.10">
    <property type="entry name" value="RNA polymerase alpha subunit dimerisation domain"/>
    <property type="match status" value="1"/>
</dbReference>
<dbReference type="Gene3D" id="3.90.1110.10">
    <property type="entry name" value="RNA polymerase Rpb2, domain 2"/>
    <property type="match status" value="1"/>
</dbReference>
<dbReference type="HAMAP" id="MF_01321">
    <property type="entry name" value="RNApol_bact_RpoB"/>
    <property type="match status" value="1"/>
</dbReference>
<dbReference type="InterPro" id="IPR042107">
    <property type="entry name" value="DNA-dir_RNA_pol_bsu_ext_1_sf"/>
</dbReference>
<dbReference type="InterPro" id="IPR019462">
    <property type="entry name" value="DNA-dir_RNA_pol_bsu_external_1"/>
</dbReference>
<dbReference type="InterPro" id="IPR015712">
    <property type="entry name" value="DNA-dir_RNA_pol_su2"/>
</dbReference>
<dbReference type="InterPro" id="IPR007120">
    <property type="entry name" value="DNA-dir_RNAP_su2_dom"/>
</dbReference>
<dbReference type="InterPro" id="IPR037033">
    <property type="entry name" value="DNA-dir_RNAP_su2_hyb_sf"/>
</dbReference>
<dbReference type="InterPro" id="IPR010243">
    <property type="entry name" value="RNA_pol_bsu_bac"/>
</dbReference>
<dbReference type="InterPro" id="IPR007121">
    <property type="entry name" value="RNA_pol_bsu_CS"/>
</dbReference>
<dbReference type="InterPro" id="IPR007644">
    <property type="entry name" value="RNA_pol_bsu_protrusion"/>
</dbReference>
<dbReference type="InterPro" id="IPR007642">
    <property type="entry name" value="RNA_pol_Rpb2_2"/>
</dbReference>
<dbReference type="InterPro" id="IPR037034">
    <property type="entry name" value="RNA_pol_Rpb2_2_sf"/>
</dbReference>
<dbReference type="InterPro" id="IPR007645">
    <property type="entry name" value="RNA_pol_Rpb2_3"/>
</dbReference>
<dbReference type="InterPro" id="IPR007641">
    <property type="entry name" value="RNA_pol_Rpb2_7"/>
</dbReference>
<dbReference type="InterPro" id="IPR014724">
    <property type="entry name" value="RNA_pol_RPB2_OB-fold"/>
</dbReference>
<dbReference type="NCBIfam" id="NF001616">
    <property type="entry name" value="PRK00405.1"/>
    <property type="match status" value="1"/>
</dbReference>
<dbReference type="NCBIfam" id="TIGR02013">
    <property type="entry name" value="rpoB"/>
    <property type="match status" value="1"/>
</dbReference>
<dbReference type="PANTHER" id="PTHR20856">
    <property type="entry name" value="DNA-DIRECTED RNA POLYMERASE I SUBUNIT 2"/>
    <property type="match status" value="1"/>
</dbReference>
<dbReference type="Pfam" id="PF04563">
    <property type="entry name" value="RNA_pol_Rpb2_1"/>
    <property type="match status" value="1"/>
</dbReference>
<dbReference type="Pfam" id="PF04561">
    <property type="entry name" value="RNA_pol_Rpb2_2"/>
    <property type="match status" value="2"/>
</dbReference>
<dbReference type="Pfam" id="PF04565">
    <property type="entry name" value="RNA_pol_Rpb2_3"/>
    <property type="match status" value="1"/>
</dbReference>
<dbReference type="Pfam" id="PF10385">
    <property type="entry name" value="RNA_pol_Rpb2_45"/>
    <property type="match status" value="1"/>
</dbReference>
<dbReference type="Pfam" id="PF00562">
    <property type="entry name" value="RNA_pol_Rpb2_6"/>
    <property type="match status" value="1"/>
</dbReference>
<dbReference type="Pfam" id="PF04560">
    <property type="entry name" value="RNA_pol_Rpb2_7"/>
    <property type="match status" value="1"/>
</dbReference>
<dbReference type="SUPFAM" id="SSF64484">
    <property type="entry name" value="beta and beta-prime subunits of DNA dependent RNA-polymerase"/>
    <property type="match status" value="1"/>
</dbReference>
<dbReference type="PROSITE" id="PS01166">
    <property type="entry name" value="RNA_POL_BETA"/>
    <property type="match status" value="1"/>
</dbReference>
<accession>A2RC51</accession>
<proteinExistence type="inferred from homology"/>
<reference key="1">
    <citation type="journal article" date="2007" name="J. Bacteriol.">
        <title>Complete genome of acute rheumatic fever-associated serotype M5 Streptococcus pyogenes strain Manfredo.</title>
        <authorList>
            <person name="Holden M.T.G."/>
            <person name="Scott A."/>
            <person name="Cherevach I."/>
            <person name="Chillingworth T."/>
            <person name="Churcher C."/>
            <person name="Cronin A."/>
            <person name="Dowd L."/>
            <person name="Feltwell T."/>
            <person name="Hamlin N."/>
            <person name="Holroyd S."/>
            <person name="Jagels K."/>
            <person name="Moule S."/>
            <person name="Mungall K."/>
            <person name="Quail M.A."/>
            <person name="Price C."/>
            <person name="Rabbinowitsch E."/>
            <person name="Sharp S."/>
            <person name="Skelton J."/>
            <person name="Whitehead S."/>
            <person name="Barrell B.G."/>
            <person name="Kehoe M."/>
            <person name="Parkhill J."/>
        </authorList>
    </citation>
    <scope>NUCLEOTIDE SEQUENCE [LARGE SCALE GENOMIC DNA]</scope>
    <source>
        <strain>Manfredo</strain>
    </source>
</reference>
<evidence type="ECO:0000255" key="1">
    <source>
        <dbReference type="HAMAP-Rule" id="MF_01321"/>
    </source>
</evidence>
<feature type="chain" id="PRO_0000300413" description="DNA-directed RNA polymerase subunit beta">
    <location>
        <begin position="1"/>
        <end position="1188"/>
    </location>
</feature>